<proteinExistence type="evidence at protein level"/>
<evidence type="ECO:0000250" key="1"/>
<evidence type="ECO:0000255" key="2">
    <source>
        <dbReference type="PROSITE-ProRule" id="PRU00691"/>
    </source>
</evidence>
<evidence type="ECO:0000305" key="3"/>
<evidence type="ECO:0007829" key="4">
    <source>
        <dbReference type="PDB" id="5VO7"/>
    </source>
</evidence>
<dbReference type="EMBL" id="AF023161">
    <property type="protein sequence ID" value="AAB80940.1"/>
    <property type="molecule type" value="Genomic_DNA"/>
</dbReference>
<dbReference type="PDB" id="5VO7">
    <property type="method" value="NMR"/>
    <property type="chains" value="A=1-112"/>
</dbReference>
<dbReference type="PDBsum" id="5VO7"/>
<dbReference type="BMRB" id="O30974"/>
<dbReference type="SMR" id="O30974"/>
<dbReference type="GO" id="GO:0005829">
    <property type="term" value="C:cytosol"/>
    <property type="evidence" value="ECO:0007669"/>
    <property type="project" value="TreeGrafter"/>
</dbReference>
<dbReference type="GO" id="GO:0015035">
    <property type="term" value="F:protein-disulfide reductase activity"/>
    <property type="evidence" value="ECO:0007669"/>
    <property type="project" value="InterPro"/>
</dbReference>
<dbReference type="GO" id="GO:0045454">
    <property type="term" value="P:cell redox homeostasis"/>
    <property type="evidence" value="ECO:0007669"/>
    <property type="project" value="TreeGrafter"/>
</dbReference>
<dbReference type="CDD" id="cd02947">
    <property type="entry name" value="TRX_family"/>
    <property type="match status" value="1"/>
</dbReference>
<dbReference type="FunFam" id="3.40.30.10:FF:000001">
    <property type="entry name" value="Thioredoxin"/>
    <property type="match status" value="1"/>
</dbReference>
<dbReference type="Gene3D" id="3.40.30.10">
    <property type="entry name" value="Glutaredoxin"/>
    <property type="match status" value="1"/>
</dbReference>
<dbReference type="InterPro" id="IPR005746">
    <property type="entry name" value="Thioredoxin"/>
</dbReference>
<dbReference type="InterPro" id="IPR036249">
    <property type="entry name" value="Thioredoxin-like_sf"/>
</dbReference>
<dbReference type="InterPro" id="IPR017937">
    <property type="entry name" value="Thioredoxin_CS"/>
</dbReference>
<dbReference type="InterPro" id="IPR013766">
    <property type="entry name" value="Thioredoxin_domain"/>
</dbReference>
<dbReference type="NCBIfam" id="TIGR01068">
    <property type="entry name" value="thioredoxin"/>
    <property type="match status" value="1"/>
</dbReference>
<dbReference type="PANTHER" id="PTHR45663">
    <property type="entry name" value="GEO12009P1"/>
    <property type="match status" value="1"/>
</dbReference>
<dbReference type="PANTHER" id="PTHR45663:SF11">
    <property type="entry name" value="GEO12009P1"/>
    <property type="match status" value="1"/>
</dbReference>
<dbReference type="Pfam" id="PF00085">
    <property type="entry name" value="Thioredoxin"/>
    <property type="match status" value="1"/>
</dbReference>
<dbReference type="PIRSF" id="PIRSF000077">
    <property type="entry name" value="Thioredoxin"/>
    <property type="match status" value="1"/>
</dbReference>
<dbReference type="PRINTS" id="PR00421">
    <property type="entry name" value="THIOREDOXIN"/>
</dbReference>
<dbReference type="SUPFAM" id="SSF52833">
    <property type="entry name" value="Thioredoxin-like"/>
    <property type="match status" value="1"/>
</dbReference>
<dbReference type="PROSITE" id="PS00194">
    <property type="entry name" value="THIOREDOXIN_1"/>
    <property type="match status" value="1"/>
</dbReference>
<dbReference type="PROSITE" id="PS51352">
    <property type="entry name" value="THIOREDOXIN_2"/>
    <property type="match status" value="1"/>
</dbReference>
<protein>
    <recommendedName>
        <fullName>Thioredoxin</fullName>
        <shortName>Trx</shortName>
    </recommendedName>
</protein>
<sequence>MSEDSATVAVTDDSFSTDVLGSSKPVLVDFWATWCGPCKMVAPVLEEIAAEKGDQLTVAKIDVDVDANPATARDFQVVSIPTMILFKDGAPVKRIVGAKGKAALLRELSDAL</sequence>
<reference key="1">
    <citation type="journal article" date="1998" name="Res. Microbiol.">
        <title>Molecular characterization of the thioredoxin system of Mycobacterium smegmatis.</title>
        <authorList>
            <person name="Asano R.L."/>
            <person name="Davies J."/>
        </authorList>
    </citation>
    <scope>NUCLEOTIDE SEQUENCE [GENOMIC DNA]</scope>
    <source>
        <strain>ATCC 607 / DSM 43465 / JCM 20379 / NBRC 3207 / NRRL B-692</strain>
    </source>
</reference>
<comment type="function">
    <text evidence="1">Participates in various redox reactions through the reversible oxidation of its active center dithiol to a disulfide and catalyzes dithiol-disulfide exchange reactions.</text>
</comment>
<comment type="similarity">
    <text evidence="3">Belongs to the thioredoxin family.</text>
</comment>
<feature type="chain" id="PRO_0000120116" description="Thioredoxin">
    <location>
        <begin position="1"/>
        <end position="112"/>
    </location>
</feature>
<feature type="domain" description="Thioredoxin" evidence="2">
    <location>
        <begin position="2"/>
        <end position="112"/>
    </location>
</feature>
<feature type="disulfide bond" description="Redox-active" evidence="2">
    <location>
        <begin position="35"/>
        <end position="38"/>
    </location>
</feature>
<feature type="helix" evidence="4">
    <location>
        <begin position="16"/>
        <end position="19"/>
    </location>
</feature>
<feature type="strand" evidence="4">
    <location>
        <begin position="26"/>
        <end position="30"/>
    </location>
</feature>
<feature type="turn" evidence="4">
    <location>
        <begin position="38"/>
        <end position="41"/>
    </location>
</feature>
<feature type="helix" evidence="4">
    <location>
        <begin position="42"/>
        <end position="51"/>
    </location>
</feature>
<feature type="turn" evidence="4">
    <location>
        <begin position="52"/>
        <end position="55"/>
    </location>
</feature>
<feature type="strand" evidence="4">
    <location>
        <begin position="56"/>
        <end position="60"/>
    </location>
</feature>
<feature type="helix" evidence="4">
    <location>
        <begin position="69"/>
        <end position="74"/>
    </location>
</feature>
<feature type="strand" evidence="4">
    <location>
        <begin position="82"/>
        <end position="87"/>
    </location>
</feature>
<feature type="strand" evidence="4">
    <location>
        <begin position="90"/>
        <end position="96"/>
    </location>
</feature>
<feature type="helix" evidence="4">
    <location>
        <begin position="101"/>
        <end position="111"/>
    </location>
</feature>
<keyword id="KW-0002">3D-structure</keyword>
<keyword id="KW-1015">Disulfide bond</keyword>
<keyword id="KW-0249">Electron transport</keyword>
<keyword id="KW-0676">Redox-active center</keyword>
<keyword id="KW-0813">Transport</keyword>
<accession>O30974</accession>
<organism>
    <name type="scientific">Mycolicibacterium smegmatis</name>
    <name type="common">Mycobacterium smegmatis</name>
    <dbReference type="NCBI Taxonomy" id="1772"/>
    <lineage>
        <taxon>Bacteria</taxon>
        <taxon>Bacillati</taxon>
        <taxon>Actinomycetota</taxon>
        <taxon>Actinomycetes</taxon>
        <taxon>Mycobacteriales</taxon>
        <taxon>Mycobacteriaceae</taxon>
        <taxon>Mycolicibacterium</taxon>
    </lineage>
</organism>
<gene>
    <name type="primary">trxA</name>
</gene>
<name>THIO_MYCSM</name>